<reference key="1">
    <citation type="submission" date="2006-08" db="EMBL/GenBank/DDBJ databases">
        <title>Complete sequence of Alkalilimnicola ehrilichei MLHE-1.</title>
        <authorList>
            <person name="Copeland A."/>
            <person name="Lucas S."/>
            <person name="Lapidus A."/>
            <person name="Barry K."/>
            <person name="Detter J.C."/>
            <person name="Glavina del Rio T."/>
            <person name="Hammon N."/>
            <person name="Israni S."/>
            <person name="Dalin E."/>
            <person name="Tice H."/>
            <person name="Pitluck S."/>
            <person name="Sims D."/>
            <person name="Brettin T."/>
            <person name="Bruce D."/>
            <person name="Han C."/>
            <person name="Tapia R."/>
            <person name="Gilna P."/>
            <person name="Schmutz J."/>
            <person name="Larimer F."/>
            <person name="Land M."/>
            <person name="Hauser L."/>
            <person name="Kyrpides N."/>
            <person name="Mikhailova N."/>
            <person name="Oremland R.S."/>
            <person name="Hoeft S.E."/>
            <person name="Switzer-Blum J."/>
            <person name="Kulp T."/>
            <person name="King G."/>
            <person name="Tabita R."/>
            <person name="Witte B."/>
            <person name="Santini J.M."/>
            <person name="Basu P."/>
            <person name="Hollibaugh J.T."/>
            <person name="Xie G."/>
            <person name="Stolz J.F."/>
            <person name="Richardson P."/>
        </authorList>
    </citation>
    <scope>NUCLEOTIDE SEQUENCE [LARGE SCALE GENOMIC DNA]</scope>
    <source>
        <strain>ATCC BAA-1101 / DSM 17681 / MLHE-1</strain>
    </source>
</reference>
<proteinExistence type="inferred from homology"/>
<keyword id="KW-1185">Reference proteome</keyword>
<keyword id="KW-0687">Ribonucleoprotein</keyword>
<keyword id="KW-0689">Ribosomal protein</keyword>
<accession>Q0A8R3</accession>
<gene>
    <name evidence="1" type="primary">rpmF</name>
    <name type="ordered locus">Mlg_1425</name>
</gene>
<protein>
    <recommendedName>
        <fullName evidence="1">Large ribosomal subunit protein bL32</fullName>
    </recommendedName>
    <alternativeName>
        <fullName evidence="3">50S ribosomal protein L32</fullName>
    </alternativeName>
</protein>
<feature type="chain" id="PRO_0000296417" description="Large ribosomal subunit protein bL32">
    <location>
        <begin position="1"/>
        <end position="59"/>
    </location>
</feature>
<feature type="region of interest" description="Disordered" evidence="2">
    <location>
        <begin position="1"/>
        <end position="59"/>
    </location>
</feature>
<feature type="compositionally biased region" description="Basic residues" evidence="2">
    <location>
        <begin position="49"/>
        <end position="59"/>
    </location>
</feature>
<name>RL32_ALKEH</name>
<evidence type="ECO:0000255" key="1">
    <source>
        <dbReference type="HAMAP-Rule" id="MF_00340"/>
    </source>
</evidence>
<evidence type="ECO:0000256" key="2">
    <source>
        <dbReference type="SAM" id="MobiDB-lite"/>
    </source>
</evidence>
<evidence type="ECO:0000305" key="3"/>
<organism>
    <name type="scientific">Alkalilimnicola ehrlichii (strain ATCC BAA-1101 / DSM 17681 / MLHE-1)</name>
    <dbReference type="NCBI Taxonomy" id="187272"/>
    <lineage>
        <taxon>Bacteria</taxon>
        <taxon>Pseudomonadati</taxon>
        <taxon>Pseudomonadota</taxon>
        <taxon>Gammaproteobacteria</taxon>
        <taxon>Chromatiales</taxon>
        <taxon>Ectothiorhodospiraceae</taxon>
        <taxon>Alkalilimnicola</taxon>
    </lineage>
</organism>
<sequence>MAVQQNRKTPSKRGMRRSHDALSGPALSVEPQTGETHRRHHVSPDGYYRGRKVMQGRED</sequence>
<dbReference type="EMBL" id="CP000453">
    <property type="protein sequence ID" value="ABI56774.1"/>
    <property type="molecule type" value="Genomic_DNA"/>
</dbReference>
<dbReference type="RefSeq" id="WP_011629169.1">
    <property type="nucleotide sequence ID" value="NC_008340.1"/>
</dbReference>
<dbReference type="SMR" id="Q0A8R3"/>
<dbReference type="KEGG" id="aeh:Mlg_1425"/>
<dbReference type="eggNOG" id="COG0333">
    <property type="taxonomic scope" value="Bacteria"/>
</dbReference>
<dbReference type="HOGENOM" id="CLU_129084_2_1_6"/>
<dbReference type="OrthoDB" id="9801927at2"/>
<dbReference type="Proteomes" id="UP000001962">
    <property type="component" value="Chromosome"/>
</dbReference>
<dbReference type="GO" id="GO:0015934">
    <property type="term" value="C:large ribosomal subunit"/>
    <property type="evidence" value="ECO:0007669"/>
    <property type="project" value="InterPro"/>
</dbReference>
<dbReference type="GO" id="GO:0003735">
    <property type="term" value="F:structural constituent of ribosome"/>
    <property type="evidence" value="ECO:0007669"/>
    <property type="project" value="InterPro"/>
</dbReference>
<dbReference type="GO" id="GO:0006412">
    <property type="term" value="P:translation"/>
    <property type="evidence" value="ECO:0007669"/>
    <property type="project" value="UniProtKB-UniRule"/>
</dbReference>
<dbReference type="HAMAP" id="MF_00340">
    <property type="entry name" value="Ribosomal_bL32"/>
    <property type="match status" value="1"/>
</dbReference>
<dbReference type="InterPro" id="IPR002677">
    <property type="entry name" value="Ribosomal_bL32"/>
</dbReference>
<dbReference type="InterPro" id="IPR044957">
    <property type="entry name" value="Ribosomal_bL32_bact"/>
</dbReference>
<dbReference type="InterPro" id="IPR011332">
    <property type="entry name" value="Ribosomal_zn-bd"/>
</dbReference>
<dbReference type="NCBIfam" id="TIGR01031">
    <property type="entry name" value="rpmF_bact"/>
    <property type="match status" value="1"/>
</dbReference>
<dbReference type="PANTHER" id="PTHR35534">
    <property type="entry name" value="50S RIBOSOMAL PROTEIN L32"/>
    <property type="match status" value="1"/>
</dbReference>
<dbReference type="PANTHER" id="PTHR35534:SF1">
    <property type="entry name" value="LARGE RIBOSOMAL SUBUNIT PROTEIN BL32"/>
    <property type="match status" value="1"/>
</dbReference>
<dbReference type="Pfam" id="PF01783">
    <property type="entry name" value="Ribosomal_L32p"/>
    <property type="match status" value="1"/>
</dbReference>
<dbReference type="SUPFAM" id="SSF57829">
    <property type="entry name" value="Zn-binding ribosomal proteins"/>
    <property type="match status" value="1"/>
</dbReference>
<comment type="similarity">
    <text evidence="1">Belongs to the bacterial ribosomal protein bL32 family.</text>
</comment>